<name>VIAA_ECO55</name>
<reference key="1">
    <citation type="journal article" date="2009" name="PLoS Genet.">
        <title>Organised genome dynamics in the Escherichia coli species results in highly diverse adaptive paths.</title>
        <authorList>
            <person name="Touchon M."/>
            <person name="Hoede C."/>
            <person name="Tenaillon O."/>
            <person name="Barbe V."/>
            <person name="Baeriswyl S."/>
            <person name="Bidet P."/>
            <person name="Bingen E."/>
            <person name="Bonacorsi S."/>
            <person name="Bouchier C."/>
            <person name="Bouvet O."/>
            <person name="Calteau A."/>
            <person name="Chiapello H."/>
            <person name="Clermont O."/>
            <person name="Cruveiller S."/>
            <person name="Danchin A."/>
            <person name="Diard M."/>
            <person name="Dossat C."/>
            <person name="Karoui M.E."/>
            <person name="Frapy E."/>
            <person name="Garry L."/>
            <person name="Ghigo J.M."/>
            <person name="Gilles A.M."/>
            <person name="Johnson J."/>
            <person name="Le Bouguenec C."/>
            <person name="Lescat M."/>
            <person name="Mangenot S."/>
            <person name="Martinez-Jehanne V."/>
            <person name="Matic I."/>
            <person name="Nassif X."/>
            <person name="Oztas S."/>
            <person name="Petit M.A."/>
            <person name="Pichon C."/>
            <person name="Rouy Z."/>
            <person name="Ruf C.S."/>
            <person name="Schneider D."/>
            <person name="Tourret J."/>
            <person name="Vacherie B."/>
            <person name="Vallenet D."/>
            <person name="Medigue C."/>
            <person name="Rocha E.P.C."/>
            <person name="Denamur E."/>
        </authorList>
    </citation>
    <scope>NUCLEOTIDE SEQUENCE [LARGE SCALE GENOMIC DNA]</scope>
    <source>
        <strain>55989 / EAEC</strain>
    </source>
</reference>
<protein>
    <recommendedName>
        <fullName evidence="1">Regulatory protein ViaA</fullName>
    </recommendedName>
    <alternativeName>
        <fullName evidence="1">VWA interacting with AAA+ ATPase</fullName>
    </alternativeName>
</protein>
<organism>
    <name type="scientific">Escherichia coli (strain 55989 / EAEC)</name>
    <dbReference type="NCBI Taxonomy" id="585055"/>
    <lineage>
        <taxon>Bacteria</taxon>
        <taxon>Pseudomonadati</taxon>
        <taxon>Pseudomonadota</taxon>
        <taxon>Gammaproteobacteria</taxon>
        <taxon>Enterobacterales</taxon>
        <taxon>Enterobacteriaceae</taxon>
        <taxon>Escherichia</taxon>
    </lineage>
</organism>
<gene>
    <name evidence="1" type="primary">viaA</name>
    <name type="ordered locus">EC55989_4220</name>
</gene>
<proteinExistence type="inferred from homology"/>
<sequence>MLTLDTLNVMLAVSEEGLIEEMIIALLASPQLAVFFEKFPRLKAAITDDVPRWREALRSRLKDARVPPELTEEVMCYQQSQLLSTPQFIVQLPQILDLLHRLNSPWAEQARQLVDANSTITSALHTLFLQRWRLSLIVQATTLNQQLLEEEREQLLSEVQERMTLSGQLEPILADNNTAAGRLWDMSAGQLKRGDYQLIVKYGEFLNEQPELKRLAEQLGRSREAKSIPRNDAQMEAFRTMVCEPATVPEQVDGLQQSDDILRLLPPELATLGITELEYEFYRRLVEKQLLTYRLHGESWREKVIERPVVHKDYDEQPRGPFIVCVDTSGSMGGFNEQCAKAFCLALMRIALAENRRCYIMLFSTEIVRYELSGPQGIEQAIRFLSQQFRGGTDLASCFRAIMERLQSREWFDADAVVISDFIAQRLPDDVTSKVKELQRVHQHRFHAVAMSAHGKPGIMRIFDHIWRFDTGMRSRLLRRWRR</sequence>
<feature type="chain" id="PRO_1000186142" description="Regulatory protein ViaA">
    <location>
        <begin position="1"/>
        <end position="483"/>
    </location>
</feature>
<accession>B7L895</accession>
<keyword id="KW-0143">Chaperone</keyword>
<keyword id="KW-0963">Cytoplasm</keyword>
<keyword id="KW-1185">Reference proteome</keyword>
<evidence type="ECO:0000255" key="1">
    <source>
        <dbReference type="HAMAP-Rule" id="MF_01626"/>
    </source>
</evidence>
<comment type="function">
    <text evidence="1">Component of the RavA-ViaA chaperone complex, which may act on the membrane to optimize the function of some of the respiratory chains. ViaA stimulates the ATPase activity of RavA.</text>
</comment>
<comment type="subunit">
    <text evidence="1">Homodimer. Interacts with RavA.</text>
</comment>
<comment type="subcellular location">
    <subcellularLocation>
        <location evidence="1">Cytoplasm</location>
    </subcellularLocation>
</comment>
<comment type="similarity">
    <text evidence="1">Belongs to the ViaA family.</text>
</comment>
<dbReference type="EMBL" id="CU928145">
    <property type="protein sequence ID" value="CAV00839.1"/>
    <property type="molecule type" value="Genomic_DNA"/>
</dbReference>
<dbReference type="RefSeq" id="WP_000956629.1">
    <property type="nucleotide sequence ID" value="NC_011748.1"/>
</dbReference>
<dbReference type="SMR" id="B7L895"/>
<dbReference type="KEGG" id="eck:EC55989_4220"/>
<dbReference type="HOGENOM" id="CLU_022130_0_0_6"/>
<dbReference type="Proteomes" id="UP000000746">
    <property type="component" value="Chromosome"/>
</dbReference>
<dbReference type="GO" id="GO:0005829">
    <property type="term" value="C:cytosol"/>
    <property type="evidence" value="ECO:0007669"/>
    <property type="project" value="TreeGrafter"/>
</dbReference>
<dbReference type="CDD" id="cd01462">
    <property type="entry name" value="VWA_YIEM_type"/>
    <property type="match status" value="1"/>
</dbReference>
<dbReference type="Gene3D" id="3.40.50.410">
    <property type="entry name" value="von Willebrand factor, type A domain"/>
    <property type="match status" value="1"/>
</dbReference>
<dbReference type="HAMAP" id="MF_01626">
    <property type="entry name" value="ViaA"/>
    <property type="match status" value="1"/>
</dbReference>
<dbReference type="InterPro" id="IPR008912">
    <property type="entry name" value="Uncharacterised_CoxE"/>
</dbReference>
<dbReference type="InterPro" id="IPR023481">
    <property type="entry name" value="Uncharacterised_ViaA"/>
</dbReference>
<dbReference type="InterPro" id="IPR002035">
    <property type="entry name" value="VWF_A"/>
</dbReference>
<dbReference type="InterPro" id="IPR036465">
    <property type="entry name" value="vWFA_dom_sf"/>
</dbReference>
<dbReference type="NCBIfam" id="NF008230">
    <property type="entry name" value="PRK10997.1"/>
    <property type="match status" value="1"/>
</dbReference>
<dbReference type="PANTHER" id="PTHR36846">
    <property type="entry name" value="PROTEIN VIAA"/>
    <property type="match status" value="1"/>
</dbReference>
<dbReference type="PANTHER" id="PTHR36846:SF1">
    <property type="entry name" value="PROTEIN VIAA"/>
    <property type="match status" value="1"/>
</dbReference>
<dbReference type="Pfam" id="PF05762">
    <property type="entry name" value="VWA_CoxE"/>
    <property type="match status" value="1"/>
</dbReference>
<dbReference type="SMART" id="SM00327">
    <property type="entry name" value="VWA"/>
    <property type="match status" value="1"/>
</dbReference>
<dbReference type="SUPFAM" id="SSF53300">
    <property type="entry name" value="vWA-like"/>
    <property type="match status" value="1"/>
</dbReference>